<accession>B1JIQ3</accession>
<name>AROK_YERPY</name>
<reference key="1">
    <citation type="submission" date="2008-02" db="EMBL/GenBank/DDBJ databases">
        <title>Complete sequence of Yersinia pseudotuberculosis YPIII.</title>
        <authorList>
            <consortium name="US DOE Joint Genome Institute"/>
            <person name="Copeland A."/>
            <person name="Lucas S."/>
            <person name="Lapidus A."/>
            <person name="Glavina del Rio T."/>
            <person name="Dalin E."/>
            <person name="Tice H."/>
            <person name="Bruce D."/>
            <person name="Goodwin L."/>
            <person name="Pitluck S."/>
            <person name="Munk A.C."/>
            <person name="Brettin T."/>
            <person name="Detter J.C."/>
            <person name="Han C."/>
            <person name="Tapia R."/>
            <person name="Schmutz J."/>
            <person name="Larimer F."/>
            <person name="Land M."/>
            <person name="Hauser L."/>
            <person name="Challacombe J.F."/>
            <person name="Green L."/>
            <person name="Lindler L.E."/>
            <person name="Nikolich M.P."/>
            <person name="Richardson P."/>
        </authorList>
    </citation>
    <scope>NUCLEOTIDE SEQUENCE [LARGE SCALE GENOMIC DNA]</scope>
    <source>
        <strain>YPIII</strain>
    </source>
</reference>
<evidence type="ECO:0000255" key="1">
    <source>
        <dbReference type="HAMAP-Rule" id="MF_00109"/>
    </source>
</evidence>
<keyword id="KW-0028">Amino-acid biosynthesis</keyword>
<keyword id="KW-0057">Aromatic amino acid biosynthesis</keyword>
<keyword id="KW-0067">ATP-binding</keyword>
<keyword id="KW-0963">Cytoplasm</keyword>
<keyword id="KW-0418">Kinase</keyword>
<keyword id="KW-0460">Magnesium</keyword>
<keyword id="KW-0479">Metal-binding</keyword>
<keyword id="KW-0547">Nucleotide-binding</keyword>
<keyword id="KW-0808">Transferase</keyword>
<protein>
    <recommendedName>
        <fullName evidence="1">Shikimate kinase 1</fullName>
        <shortName evidence="1">SK 1</shortName>
        <ecNumber evidence="1">2.7.1.71</ecNumber>
    </recommendedName>
</protein>
<organism>
    <name type="scientific">Yersinia pseudotuberculosis serotype O:3 (strain YPIII)</name>
    <dbReference type="NCBI Taxonomy" id="502800"/>
    <lineage>
        <taxon>Bacteria</taxon>
        <taxon>Pseudomonadati</taxon>
        <taxon>Pseudomonadota</taxon>
        <taxon>Gammaproteobacteria</taxon>
        <taxon>Enterobacterales</taxon>
        <taxon>Yersiniaceae</taxon>
        <taxon>Yersinia</taxon>
    </lineage>
</organism>
<comment type="function">
    <text evidence="1">Catalyzes the specific phosphorylation of the 3-hydroxyl group of shikimic acid using ATP as a cosubstrate.</text>
</comment>
<comment type="catalytic activity">
    <reaction evidence="1">
        <text>shikimate + ATP = 3-phosphoshikimate + ADP + H(+)</text>
        <dbReference type="Rhea" id="RHEA:13121"/>
        <dbReference type="ChEBI" id="CHEBI:15378"/>
        <dbReference type="ChEBI" id="CHEBI:30616"/>
        <dbReference type="ChEBI" id="CHEBI:36208"/>
        <dbReference type="ChEBI" id="CHEBI:145989"/>
        <dbReference type="ChEBI" id="CHEBI:456216"/>
        <dbReference type="EC" id="2.7.1.71"/>
    </reaction>
</comment>
<comment type="cofactor">
    <cofactor evidence="1">
        <name>Mg(2+)</name>
        <dbReference type="ChEBI" id="CHEBI:18420"/>
    </cofactor>
    <text evidence="1">Binds 1 Mg(2+) ion per subunit.</text>
</comment>
<comment type="pathway">
    <text evidence="1">Metabolic intermediate biosynthesis; chorismate biosynthesis; chorismate from D-erythrose 4-phosphate and phosphoenolpyruvate: step 5/7.</text>
</comment>
<comment type="subunit">
    <text evidence="1">Monomer.</text>
</comment>
<comment type="subcellular location">
    <subcellularLocation>
        <location evidence="1">Cytoplasm</location>
    </subcellularLocation>
</comment>
<comment type="similarity">
    <text evidence="1">Belongs to the shikimate kinase family.</text>
</comment>
<gene>
    <name evidence="1" type="primary">aroK</name>
    <name type="ordered locus">YPK_0225</name>
</gene>
<feature type="chain" id="PRO_1000094437" description="Shikimate kinase 1">
    <location>
        <begin position="1"/>
        <end position="173"/>
    </location>
</feature>
<feature type="binding site" evidence="1">
    <location>
        <begin position="14"/>
        <end position="19"/>
    </location>
    <ligand>
        <name>ATP</name>
        <dbReference type="ChEBI" id="CHEBI:30616"/>
    </ligand>
</feature>
<feature type="binding site" evidence="1">
    <location>
        <position position="18"/>
    </location>
    <ligand>
        <name>Mg(2+)</name>
        <dbReference type="ChEBI" id="CHEBI:18420"/>
    </ligand>
</feature>
<feature type="binding site" evidence="1">
    <location>
        <position position="36"/>
    </location>
    <ligand>
        <name>substrate</name>
    </ligand>
</feature>
<feature type="binding site" evidence="1">
    <location>
        <position position="60"/>
    </location>
    <ligand>
        <name>substrate</name>
    </ligand>
</feature>
<feature type="binding site" evidence="1">
    <location>
        <position position="82"/>
    </location>
    <ligand>
        <name>substrate</name>
    </ligand>
</feature>
<feature type="binding site" evidence="1">
    <location>
        <position position="120"/>
    </location>
    <ligand>
        <name>ATP</name>
        <dbReference type="ChEBI" id="CHEBI:30616"/>
    </ligand>
</feature>
<feature type="binding site" evidence="1">
    <location>
        <position position="140"/>
    </location>
    <ligand>
        <name>substrate</name>
    </ligand>
</feature>
<feature type="binding site" evidence="1">
    <location>
        <position position="157"/>
    </location>
    <ligand>
        <name>ATP</name>
        <dbReference type="ChEBI" id="CHEBI:30616"/>
    </ligand>
</feature>
<proteinExistence type="inferred from homology"/>
<sequence length="173" mass="19532">MAEKRNIFLVGPMGAGKSTIGRQLAQQLNMEFFDSDQEIERRTGADVGWVFDVEGEEGFRDREEKVINELTEKQGIVLATGGGSVKSRETRNRLSARGVVVYLETTIEKQLARTQRDKKRPLLQVDEPPREVLEALAKERNPLYEEIADVTIRTDDQSAKVVANQIINMLESN</sequence>
<dbReference type="EC" id="2.7.1.71" evidence="1"/>
<dbReference type="EMBL" id="CP000950">
    <property type="protein sequence ID" value="ACA66538.1"/>
    <property type="molecule type" value="Genomic_DNA"/>
</dbReference>
<dbReference type="RefSeq" id="WP_002208899.1">
    <property type="nucleotide sequence ID" value="NZ_CP009792.1"/>
</dbReference>
<dbReference type="SMR" id="B1JIQ3"/>
<dbReference type="GeneID" id="96663260"/>
<dbReference type="KEGG" id="ypy:YPK_0225"/>
<dbReference type="PATRIC" id="fig|502800.11.peg.831"/>
<dbReference type="UniPathway" id="UPA00053">
    <property type="reaction ID" value="UER00088"/>
</dbReference>
<dbReference type="GO" id="GO:0005829">
    <property type="term" value="C:cytosol"/>
    <property type="evidence" value="ECO:0007669"/>
    <property type="project" value="TreeGrafter"/>
</dbReference>
<dbReference type="GO" id="GO:0005524">
    <property type="term" value="F:ATP binding"/>
    <property type="evidence" value="ECO:0007669"/>
    <property type="project" value="UniProtKB-UniRule"/>
</dbReference>
<dbReference type="GO" id="GO:0000287">
    <property type="term" value="F:magnesium ion binding"/>
    <property type="evidence" value="ECO:0007669"/>
    <property type="project" value="UniProtKB-UniRule"/>
</dbReference>
<dbReference type="GO" id="GO:0004765">
    <property type="term" value="F:shikimate kinase activity"/>
    <property type="evidence" value="ECO:0007669"/>
    <property type="project" value="UniProtKB-UniRule"/>
</dbReference>
<dbReference type="GO" id="GO:0008652">
    <property type="term" value="P:amino acid biosynthetic process"/>
    <property type="evidence" value="ECO:0007669"/>
    <property type="project" value="UniProtKB-KW"/>
</dbReference>
<dbReference type="GO" id="GO:0009073">
    <property type="term" value="P:aromatic amino acid family biosynthetic process"/>
    <property type="evidence" value="ECO:0007669"/>
    <property type="project" value="UniProtKB-KW"/>
</dbReference>
<dbReference type="GO" id="GO:0009423">
    <property type="term" value="P:chorismate biosynthetic process"/>
    <property type="evidence" value="ECO:0007669"/>
    <property type="project" value="UniProtKB-UniRule"/>
</dbReference>
<dbReference type="CDD" id="cd00464">
    <property type="entry name" value="SK"/>
    <property type="match status" value="1"/>
</dbReference>
<dbReference type="FunFam" id="3.40.50.300:FF:000099">
    <property type="entry name" value="Shikimate kinase 1"/>
    <property type="match status" value="1"/>
</dbReference>
<dbReference type="Gene3D" id="3.40.50.300">
    <property type="entry name" value="P-loop containing nucleotide triphosphate hydrolases"/>
    <property type="match status" value="1"/>
</dbReference>
<dbReference type="HAMAP" id="MF_00109">
    <property type="entry name" value="Shikimate_kinase"/>
    <property type="match status" value="1"/>
</dbReference>
<dbReference type="InterPro" id="IPR027417">
    <property type="entry name" value="P-loop_NTPase"/>
</dbReference>
<dbReference type="InterPro" id="IPR031322">
    <property type="entry name" value="Shikimate/glucono_kinase"/>
</dbReference>
<dbReference type="InterPro" id="IPR000623">
    <property type="entry name" value="Shikimate_kinase/TSH1"/>
</dbReference>
<dbReference type="InterPro" id="IPR023000">
    <property type="entry name" value="Shikimate_kinase_CS"/>
</dbReference>
<dbReference type="NCBIfam" id="NF003456">
    <property type="entry name" value="PRK05057.1"/>
    <property type="match status" value="1"/>
</dbReference>
<dbReference type="PANTHER" id="PTHR21087">
    <property type="entry name" value="SHIKIMATE KINASE"/>
    <property type="match status" value="1"/>
</dbReference>
<dbReference type="PANTHER" id="PTHR21087:SF16">
    <property type="entry name" value="SHIKIMATE KINASE 1, CHLOROPLASTIC"/>
    <property type="match status" value="1"/>
</dbReference>
<dbReference type="Pfam" id="PF01202">
    <property type="entry name" value="SKI"/>
    <property type="match status" value="1"/>
</dbReference>
<dbReference type="PRINTS" id="PR01100">
    <property type="entry name" value="SHIKIMTKNASE"/>
</dbReference>
<dbReference type="SUPFAM" id="SSF52540">
    <property type="entry name" value="P-loop containing nucleoside triphosphate hydrolases"/>
    <property type="match status" value="1"/>
</dbReference>
<dbReference type="PROSITE" id="PS01128">
    <property type="entry name" value="SHIKIMATE_KINASE"/>
    <property type="match status" value="1"/>
</dbReference>